<organism>
    <name type="scientific">Rattus norvegicus</name>
    <name type="common">Rat</name>
    <dbReference type="NCBI Taxonomy" id="10116"/>
    <lineage>
        <taxon>Eukaryota</taxon>
        <taxon>Metazoa</taxon>
        <taxon>Chordata</taxon>
        <taxon>Craniata</taxon>
        <taxon>Vertebrata</taxon>
        <taxon>Euteleostomi</taxon>
        <taxon>Mammalia</taxon>
        <taxon>Eutheria</taxon>
        <taxon>Euarchontoglires</taxon>
        <taxon>Glires</taxon>
        <taxon>Rodentia</taxon>
        <taxon>Myomorpha</taxon>
        <taxon>Muroidea</taxon>
        <taxon>Muridae</taxon>
        <taxon>Murinae</taxon>
        <taxon>Rattus</taxon>
    </lineage>
</organism>
<protein>
    <recommendedName>
        <fullName>Centlein</fullName>
    </recommendedName>
    <alternativeName>
        <fullName>Centrosomal protein</fullName>
    </alternativeName>
</protein>
<keyword id="KW-0175">Coiled coil</keyword>
<keyword id="KW-0963">Cytoplasm</keyword>
<keyword id="KW-0206">Cytoskeleton</keyword>
<keyword id="KW-0597">Phosphoprotein</keyword>
<keyword id="KW-1185">Reference proteome</keyword>
<sequence length="721" mass="82721">MNLQDELDELKIYMTIDKTTIQELNRCMAEKREEQLFRHHEDAGVKKSTPEKNEKAISEQTLEKVIELENRLKSFEKNSRKLKEESKKLKKENDFLKSHLQHYQEDSESRGKELEKLLRVSSSVEQDKSELQTKVTALEREVTTLRRQVAKAKALRDENEEVVNPEEKEHCPTDKAKSEMATTDVRAQHCDCKTTTTKVKFKAAKKKCSVGRHHTVLNHSIKVMSHVENLSKDGWEDMSEGSSDSETQTFQNLGTVIVETSQNIRPIENDGNQKETDQTEDSRAQQEVQTYSCEDLKAPQNTKKMTFQNKSGSLQKNLHSALPARVNREKCKTKPAQKSSSNTILLRERIVSLQQQNSLLQNARKAAESSAKEFKEANEKLLHQQQISDHRFQTSRQTIKLTLDLAELRKEKEDLLKKVESSSDITSLAEEVSRIMAPQIQVTTLGPSRSTDLEIKQLQCKLKNATNELTKQSSSVKSLKLELLAKDDHMKAMQEKMSRMERDITMKRHLIEDLKFRQKINSESNESFNEMLGTLEKKDLKMNLLISKLNDTETAMAQIKSAASEQLQGLALQSEQVLEGTQKKLLLANEKIEEFTVFVQALVNELQSDAHRTRQQVRELRQTQKSRHACKTSTHKAQTLAASILNISRSDLEEILHTGDEMEIEKTKIDAENDKDWMLYIQKLLQGQLPFASYLLEAVLGKIKENKKLTEGYFTVMKDIK</sequence>
<accession>A9ZSY0</accession>
<name>CNTLN_RAT</name>
<gene>
    <name evidence="2" type="primary">Cntln</name>
</gene>
<reference evidence="6 7" key="1">
    <citation type="journal article" date="2008" name="Biochem. Biophys. Res. Commun.">
        <title>Identification and characterization of the novel centrosomal protein centlein.</title>
        <authorList>
            <person name="Makino K."/>
            <person name="Umeda K."/>
            <person name="Uezu A."/>
            <person name="Hiragami Y."/>
            <person name="Sakamoto T."/>
            <person name="Ihn H."/>
            <person name="Nakanishi H."/>
        </authorList>
    </citation>
    <scope>NUCLEOTIDE SEQUENCE [MRNA]</scope>
    <scope>SUBCELLULAR LOCATION</scope>
</reference>
<evidence type="ECO:0000250" key="1">
    <source>
        <dbReference type="UniProtKB" id="A2AM05"/>
    </source>
</evidence>
<evidence type="ECO:0000250" key="2">
    <source>
        <dbReference type="UniProtKB" id="Q9NXG0"/>
    </source>
</evidence>
<evidence type="ECO:0000255" key="3"/>
<evidence type="ECO:0000256" key="4">
    <source>
        <dbReference type="SAM" id="MobiDB-lite"/>
    </source>
</evidence>
<evidence type="ECO:0000269" key="5">
    <source>
    </source>
</evidence>
<evidence type="ECO:0000305" key="6"/>
<evidence type="ECO:0000312" key="7">
    <source>
        <dbReference type="EMBL" id="BAF98578.1"/>
    </source>
</evidence>
<dbReference type="EMBL" id="AB369315">
    <property type="protein sequence ID" value="BAF98578.1"/>
    <property type="molecule type" value="mRNA"/>
</dbReference>
<dbReference type="RefSeq" id="NP_001107874.1">
    <property type="nucleotide sequence ID" value="NM_001114402.1"/>
</dbReference>
<dbReference type="SMR" id="A9ZSY0"/>
<dbReference type="FunCoup" id="A9ZSY0">
    <property type="interactions" value="1628"/>
</dbReference>
<dbReference type="STRING" id="10116.ENSRNOP00000008757"/>
<dbReference type="PhosphoSitePlus" id="A9ZSY0"/>
<dbReference type="PaxDb" id="10116-ENSRNOP00000008757"/>
<dbReference type="PeptideAtlas" id="A9ZSY0"/>
<dbReference type="GeneID" id="679640"/>
<dbReference type="KEGG" id="rno:679640"/>
<dbReference type="UCSC" id="RGD:1308101">
    <property type="organism name" value="rat"/>
</dbReference>
<dbReference type="AGR" id="RGD:1308101"/>
<dbReference type="CTD" id="54875"/>
<dbReference type="RGD" id="1308101">
    <property type="gene designation" value="Cntln"/>
</dbReference>
<dbReference type="eggNOG" id="ENOG502QRVC">
    <property type="taxonomic scope" value="Eukaryota"/>
</dbReference>
<dbReference type="InParanoid" id="A9ZSY0"/>
<dbReference type="PhylomeDB" id="A9ZSY0"/>
<dbReference type="Proteomes" id="UP000002494">
    <property type="component" value="Unplaced"/>
</dbReference>
<dbReference type="GO" id="GO:0005814">
    <property type="term" value="C:centriole"/>
    <property type="evidence" value="ECO:0000266"/>
    <property type="project" value="RGD"/>
</dbReference>
<dbReference type="GO" id="GO:0005737">
    <property type="term" value="C:cytoplasm"/>
    <property type="evidence" value="ECO:0000266"/>
    <property type="project" value="RGD"/>
</dbReference>
<dbReference type="GO" id="GO:0120212">
    <property type="term" value="C:sperm head-tail coupling apparatus"/>
    <property type="evidence" value="ECO:0000266"/>
    <property type="project" value="RGD"/>
</dbReference>
<dbReference type="GO" id="GO:0019904">
    <property type="term" value="F:protein domain specific binding"/>
    <property type="evidence" value="ECO:0000266"/>
    <property type="project" value="RGD"/>
</dbReference>
<dbReference type="GO" id="GO:0019901">
    <property type="term" value="F:protein kinase binding"/>
    <property type="evidence" value="ECO:0000266"/>
    <property type="project" value="RGD"/>
</dbReference>
<dbReference type="GO" id="GO:0030674">
    <property type="term" value="F:protein-macromolecule adaptor activity"/>
    <property type="evidence" value="ECO:0000266"/>
    <property type="project" value="RGD"/>
</dbReference>
<dbReference type="GO" id="GO:0010457">
    <property type="term" value="P:centriole-centriole cohesion"/>
    <property type="evidence" value="ECO:0000266"/>
    <property type="project" value="RGD"/>
</dbReference>
<dbReference type="GO" id="GO:0008104">
    <property type="term" value="P:protein localization"/>
    <property type="evidence" value="ECO:0000266"/>
    <property type="project" value="RGD"/>
</dbReference>
<dbReference type="GO" id="GO:0033365">
    <property type="term" value="P:protein localization to organelle"/>
    <property type="evidence" value="ECO:0000266"/>
    <property type="project" value="RGD"/>
</dbReference>
<dbReference type="GO" id="GO:0065003">
    <property type="term" value="P:protein-containing complex assembly"/>
    <property type="evidence" value="ECO:0000266"/>
    <property type="project" value="RGD"/>
</dbReference>
<dbReference type="GO" id="GO:0032880">
    <property type="term" value="P:regulation of protein localization"/>
    <property type="evidence" value="ECO:0000266"/>
    <property type="project" value="RGD"/>
</dbReference>
<dbReference type="GO" id="GO:0007338">
    <property type="term" value="P:single fertilization"/>
    <property type="evidence" value="ECO:0000266"/>
    <property type="project" value="RGD"/>
</dbReference>
<dbReference type="GO" id="GO:0007283">
    <property type="term" value="P:spermatogenesis"/>
    <property type="evidence" value="ECO:0000266"/>
    <property type="project" value="RGD"/>
</dbReference>
<dbReference type="InterPro" id="IPR038810">
    <property type="entry name" value="CNTLN"/>
</dbReference>
<dbReference type="PANTHER" id="PTHR18957">
    <property type="entry name" value="CENTLEIN"/>
    <property type="match status" value="1"/>
</dbReference>
<dbReference type="PANTHER" id="PTHR18957:SF0">
    <property type="entry name" value="CENTLEIN"/>
    <property type="match status" value="1"/>
</dbReference>
<feature type="chain" id="PRO_0000328977" description="Centlein">
    <location>
        <begin position="1" status="less than"/>
        <end position="721"/>
    </location>
</feature>
<feature type="region of interest" description="Disordered" evidence="4">
    <location>
        <begin position="156"/>
        <end position="180"/>
    </location>
</feature>
<feature type="region of interest" description="Disordered" evidence="4">
    <location>
        <begin position="259"/>
        <end position="288"/>
    </location>
</feature>
<feature type="coiled-coil region" evidence="3">
    <location>
        <begin position="52"/>
        <end position="164"/>
    </location>
</feature>
<feature type="coiled-coil region" evidence="3">
    <location>
        <begin position="345"/>
        <end position="515"/>
    </location>
</feature>
<feature type="coiled-coil region" evidence="3">
    <location>
        <begin position="573"/>
        <end position="626"/>
    </location>
</feature>
<feature type="compositionally biased region" description="Basic and acidic residues" evidence="4">
    <location>
        <begin position="165"/>
        <end position="178"/>
    </location>
</feature>
<feature type="compositionally biased region" description="Basic and acidic residues" evidence="4">
    <location>
        <begin position="267"/>
        <end position="284"/>
    </location>
</feature>
<feature type="modified residue" description="Phosphothreonine" evidence="1">
    <location>
        <position position="658"/>
    </location>
</feature>
<feature type="non-terminal residue">
    <location>
        <position position="1"/>
    </location>
</feature>
<comment type="function">
    <text evidence="2">Required for centrosome cohesion and recruitment of CEP68 to centrosomes.</text>
</comment>
<comment type="subunit">
    <text evidence="2">Interacts with CEP250 and CEP68. Interacts with NEK2; the interaction leads to phosphorylation of CNTLN.</text>
</comment>
<comment type="subcellular location">
    <subcellularLocation>
        <location evidence="5">Cytoplasm</location>
        <location evidence="5">Cytoskeleton</location>
        <location evidence="5">Microtubule organizing center</location>
        <location evidence="5">Centrosome</location>
        <location evidence="5">Centriole</location>
    </subcellularLocation>
    <text evidence="2 5">Colocalizes with gamma-tubulin during interphase and mitosis (PubMed:18086554). Appears to associate with the mother centriole during G1 phase and with daughter centrioles towards G1/S phase (PubMed:18086554). Localizes to the proximal ends of the centrioles (By similarity). Levels are high at interphase centrosomes but are reduced on mitotic spindle poles (By similarity).</text>
</comment>
<comment type="PTM">
    <text evidence="2">Phosphorylated directly or indirectly by NEK2.</text>
</comment>
<proteinExistence type="evidence at transcript level"/>